<gene>
    <name evidence="1" type="primary">ruvB</name>
    <name type="ordered locus">CTLon_0291</name>
</gene>
<proteinExistence type="inferred from homology"/>
<evidence type="ECO:0000255" key="1">
    <source>
        <dbReference type="HAMAP-Rule" id="MF_00016"/>
    </source>
</evidence>
<accession>B0BB27</accession>
<organism>
    <name type="scientific">Chlamydia trachomatis serovar L2b (strain UCH-1/proctitis)</name>
    <dbReference type="NCBI Taxonomy" id="471473"/>
    <lineage>
        <taxon>Bacteria</taxon>
        <taxon>Pseudomonadati</taxon>
        <taxon>Chlamydiota</taxon>
        <taxon>Chlamydiia</taxon>
        <taxon>Chlamydiales</taxon>
        <taxon>Chlamydiaceae</taxon>
        <taxon>Chlamydia/Chlamydophila group</taxon>
        <taxon>Chlamydia</taxon>
    </lineage>
</organism>
<dbReference type="EC" id="3.6.4.-" evidence="1"/>
<dbReference type="EMBL" id="AM884177">
    <property type="protein sequence ID" value="CAP06689.1"/>
    <property type="molecule type" value="Genomic_DNA"/>
</dbReference>
<dbReference type="RefSeq" id="WP_009873512.1">
    <property type="nucleotide sequence ID" value="NC_010280.2"/>
</dbReference>
<dbReference type="SMR" id="B0BB27"/>
<dbReference type="KEGG" id="ctl:CTLon_0291"/>
<dbReference type="HOGENOM" id="CLU_055599_1_0_0"/>
<dbReference type="Proteomes" id="UP001154401">
    <property type="component" value="Chromosome"/>
</dbReference>
<dbReference type="GO" id="GO:0005737">
    <property type="term" value="C:cytoplasm"/>
    <property type="evidence" value="ECO:0007669"/>
    <property type="project" value="UniProtKB-SubCell"/>
</dbReference>
<dbReference type="GO" id="GO:0048476">
    <property type="term" value="C:Holliday junction resolvase complex"/>
    <property type="evidence" value="ECO:0007669"/>
    <property type="project" value="UniProtKB-UniRule"/>
</dbReference>
<dbReference type="GO" id="GO:0005524">
    <property type="term" value="F:ATP binding"/>
    <property type="evidence" value="ECO:0007669"/>
    <property type="project" value="UniProtKB-UniRule"/>
</dbReference>
<dbReference type="GO" id="GO:0016887">
    <property type="term" value="F:ATP hydrolysis activity"/>
    <property type="evidence" value="ECO:0007669"/>
    <property type="project" value="InterPro"/>
</dbReference>
<dbReference type="GO" id="GO:0000400">
    <property type="term" value="F:four-way junction DNA binding"/>
    <property type="evidence" value="ECO:0007669"/>
    <property type="project" value="UniProtKB-UniRule"/>
</dbReference>
<dbReference type="GO" id="GO:0009378">
    <property type="term" value="F:four-way junction helicase activity"/>
    <property type="evidence" value="ECO:0007669"/>
    <property type="project" value="InterPro"/>
</dbReference>
<dbReference type="GO" id="GO:0006310">
    <property type="term" value="P:DNA recombination"/>
    <property type="evidence" value="ECO:0007669"/>
    <property type="project" value="UniProtKB-UniRule"/>
</dbReference>
<dbReference type="GO" id="GO:0006281">
    <property type="term" value="P:DNA repair"/>
    <property type="evidence" value="ECO:0007669"/>
    <property type="project" value="UniProtKB-UniRule"/>
</dbReference>
<dbReference type="CDD" id="cd00009">
    <property type="entry name" value="AAA"/>
    <property type="match status" value="1"/>
</dbReference>
<dbReference type="Gene3D" id="1.10.8.60">
    <property type="match status" value="1"/>
</dbReference>
<dbReference type="Gene3D" id="3.40.50.300">
    <property type="entry name" value="P-loop containing nucleotide triphosphate hydrolases"/>
    <property type="match status" value="1"/>
</dbReference>
<dbReference type="Gene3D" id="1.10.10.10">
    <property type="entry name" value="Winged helix-like DNA-binding domain superfamily/Winged helix DNA-binding domain"/>
    <property type="match status" value="1"/>
</dbReference>
<dbReference type="HAMAP" id="MF_00016">
    <property type="entry name" value="DNA_HJ_migration_RuvB"/>
    <property type="match status" value="1"/>
</dbReference>
<dbReference type="InterPro" id="IPR003593">
    <property type="entry name" value="AAA+_ATPase"/>
</dbReference>
<dbReference type="InterPro" id="IPR041445">
    <property type="entry name" value="AAA_lid_4"/>
</dbReference>
<dbReference type="InterPro" id="IPR004605">
    <property type="entry name" value="DNA_helicase_Holl-junc_RuvB"/>
</dbReference>
<dbReference type="InterPro" id="IPR027417">
    <property type="entry name" value="P-loop_NTPase"/>
</dbReference>
<dbReference type="InterPro" id="IPR008824">
    <property type="entry name" value="RuvB-like_N"/>
</dbReference>
<dbReference type="InterPro" id="IPR008823">
    <property type="entry name" value="RuvB_C"/>
</dbReference>
<dbReference type="InterPro" id="IPR036388">
    <property type="entry name" value="WH-like_DNA-bd_sf"/>
</dbReference>
<dbReference type="InterPro" id="IPR036390">
    <property type="entry name" value="WH_DNA-bd_sf"/>
</dbReference>
<dbReference type="NCBIfam" id="NF000868">
    <property type="entry name" value="PRK00080.1"/>
    <property type="match status" value="1"/>
</dbReference>
<dbReference type="NCBIfam" id="TIGR00635">
    <property type="entry name" value="ruvB"/>
    <property type="match status" value="1"/>
</dbReference>
<dbReference type="PANTHER" id="PTHR42848">
    <property type="match status" value="1"/>
</dbReference>
<dbReference type="PANTHER" id="PTHR42848:SF1">
    <property type="entry name" value="HOLLIDAY JUNCTION BRANCH MIGRATION COMPLEX SUBUNIT RUVB"/>
    <property type="match status" value="1"/>
</dbReference>
<dbReference type="Pfam" id="PF17864">
    <property type="entry name" value="AAA_lid_4"/>
    <property type="match status" value="1"/>
</dbReference>
<dbReference type="Pfam" id="PF05491">
    <property type="entry name" value="RuvB_C"/>
    <property type="match status" value="1"/>
</dbReference>
<dbReference type="Pfam" id="PF05496">
    <property type="entry name" value="RuvB_N"/>
    <property type="match status" value="1"/>
</dbReference>
<dbReference type="SMART" id="SM00382">
    <property type="entry name" value="AAA"/>
    <property type="match status" value="1"/>
</dbReference>
<dbReference type="SUPFAM" id="SSF52540">
    <property type="entry name" value="P-loop containing nucleoside triphosphate hydrolases"/>
    <property type="match status" value="1"/>
</dbReference>
<dbReference type="SUPFAM" id="SSF46785">
    <property type="entry name" value="Winged helix' DNA-binding domain"/>
    <property type="match status" value="1"/>
</dbReference>
<name>RUVB_CHLTB</name>
<comment type="function">
    <text evidence="1">The RuvA-RuvB-RuvC complex processes Holliday junction (HJ) DNA during genetic recombination and DNA repair, while the RuvA-RuvB complex plays an important role in the rescue of blocked DNA replication forks via replication fork reversal (RFR). RuvA specifically binds to HJ cruciform DNA, conferring on it an open structure. The RuvB hexamer acts as an ATP-dependent pump, pulling dsDNA into and through the RuvAB complex. RuvB forms 2 homohexamers on either side of HJ DNA bound by 1 or 2 RuvA tetramers; 4 subunits per hexamer contact DNA at a time. Coordinated motions by a converter formed by DNA-disengaged RuvB subunits stimulates ATP hydrolysis and nucleotide exchange. Immobilization of the converter enables RuvB to convert the ATP-contained energy into a lever motion, pulling 2 nucleotides of DNA out of the RuvA tetramer per ATP hydrolyzed, thus driving DNA branch migration. The RuvB motors rotate together with the DNA substrate, which together with the progressing nucleotide cycle form the mechanistic basis for DNA recombination by continuous HJ branch migration. Branch migration allows RuvC to scan DNA until it finds its consensus sequence, where it cleaves and resolves cruciform DNA.</text>
</comment>
<comment type="catalytic activity">
    <reaction evidence="1">
        <text>ATP + H2O = ADP + phosphate + H(+)</text>
        <dbReference type="Rhea" id="RHEA:13065"/>
        <dbReference type="ChEBI" id="CHEBI:15377"/>
        <dbReference type="ChEBI" id="CHEBI:15378"/>
        <dbReference type="ChEBI" id="CHEBI:30616"/>
        <dbReference type="ChEBI" id="CHEBI:43474"/>
        <dbReference type="ChEBI" id="CHEBI:456216"/>
    </reaction>
</comment>
<comment type="subunit">
    <text evidence="1">Homohexamer. Forms an RuvA(8)-RuvB(12)-Holliday junction (HJ) complex. HJ DNA is sandwiched between 2 RuvA tetramers; dsDNA enters through RuvA and exits via RuvB. An RuvB hexamer assembles on each DNA strand where it exits the tetramer. Each RuvB hexamer is contacted by two RuvA subunits (via domain III) on 2 adjacent RuvB subunits; this complex drives branch migration. In the full resolvosome a probable DNA-RuvA(4)-RuvB(12)-RuvC(2) complex forms which resolves the HJ.</text>
</comment>
<comment type="subcellular location">
    <subcellularLocation>
        <location evidence="1">Cytoplasm</location>
    </subcellularLocation>
</comment>
<comment type="domain">
    <text evidence="1">Has 3 domains, the large (RuvB-L) and small ATPase (RuvB-S) domains and the C-terminal head (RuvB-H) domain. The head domain binds DNA, while the ATPase domains jointly bind ATP, ADP or are empty depending on the state of the subunit in the translocation cycle. During a single DNA translocation step the structure of each domain remains the same, but their relative positions change.</text>
</comment>
<comment type="similarity">
    <text evidence="1">Belongs to the RuvB family.</text>
</comment>
<sequence>MTHKISVLHQDKKFDFSLRPKKLTEFCGQKQLKERLDLFLRAAVQRNEVPGHCLFYGPPGLGKTSLAHIMANTIGKGLVIASGPQLLKPSDLIGLLTGLQEGDIFFIDEIHRMGKAAEEYLYPAMEDFKVDITLDSGPGARSVRLDLAPFTLVGATTRAGMLSEPLRTRFAFTGRVDYYTDEDLVSILSRSSQLLAIEANQETLLEIARRARGTPRLANNLLRWVRDFAQMREGNCINSAVAEKALAMLLIDNLGLNEIDIKLLSVMIDFYQGGPVGMKTLAMAVGEDVRTLEDMYEPFLILKGLVQRTARGRVATPLAYEHLNRNPKDRWGEE</sequence>
<reference key="1">
    <citation type="journal article" date="2008" name="Genome Res.">
        <title>Chlamydia trachomatis: genome sequence analysis of lymphogranuloma venereum isolates.</title>
        <authorList>
            <person name="Thomson N.R."/>
            <person name="Holden M.T.G."/>
            <person name="Carder C."/>
            <person name="Lennard N."/>
            <person name="Lockey S.J."/>
            <person name="Marsh P."/>
            <person name="Skipp P."/>
            <person name="O'Connor C.D."/>
            <person name="Goodhead I."/>
            <person name="Norbertzcak H."/>
            <person name="Harris B."/>
            <person name="Ormond D."/>
            <person name="Rance R."/>
            <person name="Quail M.A."/>
            <person name="Parkhill J."/>
            <person name="Stephens R.S."/>
            <person name="Clarke I.N."/>
        </authorList>
    </citation>
    <scope>NUCLEOTIDE SEQUENCE [LARGE SCALE GENOMIC DNA]</scope>
    <source>
        <strain>UCH-1/proctitis</strain>
    </source>
</reference>
<protein>
    <recommendedName>
        <fullName evidence="1">Holliday junction branch migration complex subunit RuvB</fullName>
        <ecNumber evidence="1">3.6.4.-</ecNumber>
    </recommendedName>
</protein>
<keyword id="KW-0067">ATP-binding</keyword>
<keyword id="KW-0963">Cytoplasm</keyword>
<keyword id="KW-0227">DNA damage</keyword>
<keyword id="KW-0233">DNA recombination</keyword>
<keyword id="KW-0234">DNA repair</keyword>
<keyword id="KW-0238">DNA-binding</keyword>
<keyword id="KW-0378">Hydrolase</keyword>
<keyword id="KW-0547">Nucleotide-binding</keyword>
<feature type="chain" id="PRO_1000089630" description="Holliday junction branch migration complex subunit RuvB">
    <location>
        <begin position="1"/>
        <end position="334"/>
    </location>
</feature>
<feature type="region of interest" description="Large ATPase domain (RuvB-L)" evidence="1">
    <location>
        <begin position="1"/>
        <end position="179"/>
    </location>
</feature>
<feature type="region of interest" description="Small ATPAse domain (RuvB-S)" evidence="1">
    <location>
        <begin position="180"/>
        <end position="250"/>
    </location>
</feature>
<feature type="region of interest" description="Head domain (RuvB-H)" evidence="1">
    <location>
        <begin position="253"/>
        <end position="334"/>
    </location>
</feature>
<feature type="binding site" evidence="1">
    <location>
        <position position="18"/>
    </location>
    <ligand>
        <name>ATP</name>
        <dbReference type="ChEBI" id="CHEBI:30616"/>
    </ligand>
</feature>
<feature type="binding site" evidence="1">
    <location>
        <position position="19"/>
    </location>
    <ligand>
        <name>ATP</name>
        <dbReference type="ChEBI" id="CHEBI:30616"/>
    </ligand>
</feature>
<feature type="binding site" evidence="1">
    <location>
        <position position="60"/>
    </location>
    <ligand>
        <name>ATP</name>
        <dbReference type="ChEBI" id="CHEBI:30616"/>
    </ligand>
</feature>
<feature type="binding site" evidence="1">
    <location>
        <position position="63"/>
    </location>
    <ligand>
        <name>ATP</name>
        <dbReference type="ChEBI" id="CHEBI:30616"/>
    </ligand>
</feature>
<feature type="binding site" evidence="1">
    <location>
        <position position="64"/>
    </location>
    <ligand>
        <name>ATP</name>
        <dbReference type="ChEBI" id="CHEBI:30616"/>
    </ligand>
</feature>
<feature type="binding site" evidence="1">
    <location>
        <position position="64"/>
    </location>
    <ligand>
        <name>Mg(2+)</name>
        <dbReference type="ChEBI" id="CHEBI:18420"/>
    </ligand>
</feature>
<feature type="binding site" evidence="1">
    <location>
        <position position="65"/>
    </location>
    <ligand>
        <name>ATP</name>
        <dbReference type="ChEBI" id="CHEBI:30616"/>
    </ligand>
</feature>
<feature type="binding site" evidence="1">
    <location>
        <begin position="126"/>
        <end position="128"/>
    </location>
    <ligand>
        <name>ATP</name>
        <dbReference type="ChEBI" id="CHEBI:30616"/>
    </ligand>
</feature>
<feature type="binding site" evidence="1">
    <location>
        <position position="169"/>
    </location>
    <ligand>
        <name>ATP</name>
        <dbReference type="ChEBI" id="CHEBI:30616"/>
    </ligand>
</feature>
<feature type="binding site" evidence="1">
    <location>
        <position position="179"/>
    </location>
    <ligand>
        <name>ATP</name>
        <dbReference type="ChEBI" id="CHEBI:30616"/>
    </ligand>
</feature>
<feature type="binding site" evidence="1">
    <location>
        <position position="216"/>
    </location>
    <ligand>
        <name>ATP</name>
        <dbReference type="ChEBI" id="CHEBI:30616"/>
    </ligand>
</feature>
<feature type="binding site" evidence="1">
    <location>
        <position position="308"/>
    </location>
    <ligand>
        <name>DNA</name>
        <dbReference type="ChEBI" id="CHEBI:16991"/>
    </ligand>
</feature>
<feature type="binding site" evidence="1">
    <location>
        <position position="313"/>
    </location>
    <ligand>
        <name>DNA</name>
        <dbReference type="ChEBI" id="CHEBI:16991"/>
    </ligand>
</feature>